<gene>
    <name evidence="1" type="primary">MEF1</name>
    <name type="ORF">CD36_12130</name>
</gene>
<name>EFGM_CANDC</name>
<organism>
    <name type="scientific">Candida dubliniensis (strain CD36 / ATCC MYA-646 / CBS 7987 / NCPF 3949 / NRRL Y-17841)</name>
    <name type="common">Yeast</name>
    <dbReference type="NCBI Taxonomy" id="573826"/>
    <lineage>
        <taxon>Eukaryota</taxon>
        <taxon>Fungi</taxon>
        <taxon>Dikarya</taxon>
        <taxon>Ascomycota</taxon>
        <taxon>Saccharomycotina</taxon>
        <taxon>Pichiomycetes</taxon>
        <taxon>Debaryomycetaceae</taxon>
        <taxon>Candida/Lodderomyces clade</taxon>
        <taxon>Candida</taxon>
    </lineage>
</organism>
<proteinExistence type="inferred from homology"/>
<reference key="1">
    <citation type="journal article" date="2009" name="Genome Res.">
        <title>Comparative genomics of the fungal pathogens Candida dubliniensis and Candida albicans.</title>
        <authorList>
            <person name="Jackson A.P."/>
            <person name="Gamble J.A."/>
            <person name="Yeomans T."/>
            <person name="Moran G.P."/>
            <person name="Saunders D."/>
            <person name="Harris D."/>
            <person name="Aslett M."/>
            <person name="Barrell J.F."/>
            <person name="Butler G."/>
            <person name="Citiulo F."/>
            <person name="Coleman D.C."/>
            <person name="de Groot P.W.J."/>
            <person name="Goodwin T.J."/>
            <person name="Quail M.A."/>
            <person name="McQuillan J."/>
            <person name="Munro C.A."/>
            <person name="Pain A."/>
            <person name="Poulter R.T."/>
            <person name="Rajandream M.A."/>
            <person name="Renauld H."/>
            <person name="Spiering M.J."/>
            <person name="Tivey A."/>
            <person name="Gow N.A.R."/>
            <person name="Barrell B."/>
            <person name="Sullivan D.J."/>
            <person name="Berriman M."/>
        </authorList>
    </citation>
    <scope>NUCLEOTIDE SEQUENCE [LARGE SCALE GENOMIC DNA]</scope>
    <source>
        <strain>CD36 / ATCC MYA-646 / CBS 7987 / NCPF 3949 / NRRL Y-17841</strain>
    </source>
</reference>
<accession>B9W9T4</accession>
<comment type="function">
    <text evidence="1">Mitochondrial GTPase that catalyzes the GTP-dependent ribosomal translocation step during translation elongation. During this step, the ribosome changes from the pre-translocational (PRE) to the post-translocational (POST) state as the newly formed A-site-bound peptidyl-tRNA and P-site-bound deacylated tRNA move to the P and E sites, respectively. Catalyzes the coordinated movement of the two tRNA molecules, the mRNA and conformational changes in the ribosome.</text>
</comment>
<comment type="pathway">
    <text evidence="1">Protein biosynthesis; polypeptide chain elongation.</text>
</comment>
<comment type="subcellular location">
    <subcellularLocation>
        <location evidence="1">Mitochondrion</location>
    </subcellularLocation>
</comment>
<comment type="similarity">
    <text evidence="2">Belongs to the TRAFAC class translation factor GTPase superfamily. Classic translation factor GTPase family. EF-G/EF-2 subfamily.</text>
</comment>
<feature type="transit peptide" description="Mitochondrion" evidence="1">
    <location>
        <begin position="1"/>
        <end position="33"/>
    </location>
</feature>
<feature type="chain" id="PRO_0000385565" description="Elongation factor G, mitochondrial">
    <location>
        <begin position="34"/>
        <end position="761"/>
    </location>
</feature>
<feature type="domain" description="tr-type G">
    <location>
        <begin position="66"/>
        <end position="347"/>
    </location>
</feature>
<feature type="binding site" evidence="1">
    <location>
        <begin position="75"/>
        <end position="82"/>
    </location>
    <ligand>
        <name>GTP</name>
        <dbReference type="ChEBI" id="CHEBI:37565"/>
    </ligand>
</feature>
<feature type="binding site" evidence="1">
    <location>
        <begin position="146"/>
        <end position="150"/>
    </location>
    <ligand>
        <name>GTP</name>
        <dbReference type="ChEBI" id="CHEBI:37565"/>
    </ligand>
</feature>
<feature type="binding site" evidence="1">
    <location>
        <begin position="200"/>
        <end position="203"/>
    </location>
    <ligand>
        <name>GTP</name>
        <dbReference type="ChEBI" id="CHEBI:37565"/>
    </ligand>
</feature>
<keyword id="KW-0251">Elongation factor</keyword>
<keyword id="KW-0342">GTP-binding</keyword>
<keyword id="KW-0496">Mitochondrion</keyword>
<keyword id="KW-0547">Nucleotide-binding</keyword>
<keyword id="KW-0648">Protein biosynthesis</keyword>
<keyword id="KW-0809">Transit peptide</keyword>
<protein>
    <recommendedName>
        <fullName evidence="1">Elongation factor G, mitochondrial</fullName>
        <shortName evidence="1">EF-Gmt</shortName>
    </recommendedName>
    <alternativeName>
        <fullName evidence="1">Elongation factor G 1, mitochondrial</fullName>
        <shortName evidence="1">mEF-G 1</shortName>
    </alternativeName>
    <alternativeName>
        <fullName evidence="1">Elongation factor G1</fullName>
    </alternativeName>
</protein>
<dbReference type="EMBL" id="FM992688">
    <property type="protein sequence ID" value="CAX45568.1"/>
    <property type="molecule type" value="Genomic_DNA"/>
</dbReference>
<dbReference type="RefSeq" id="XP_002417853.1">
    <property type="nucleotide sequence ID" value="XM_002417808.1"/>
</dbReference>
<dbReference type="SMR" id="B9W9T4"/>
<dbReference type="GeneID" id="8045403"/>
<dbReference type="KEGG" id="cdu:CD36_12130"/>
<dbReference type="CGD" id="CAL0000166175">
    <property type="gene designation" value="Cd36_12130"/>
</dbReference>
<dbReference type="VEuPathDB" id="FungiDB:CD36_12130"/>
<dbReference type="eggNOG" id="KOG0465">
    <property type="taxonomic scope" value="Eukaryota"/>
</dbReference>
<dbReference type="HOGENOM" id="CLU_002794_4_0_1"/>
<dbReference type="OrthoDB" id="198619at2759"/>
<dbReference type="UniPathway" id="UPA00345"/>
<dbReference type="Proteomes" id="UP000002605">
    <property type="component" value="Chromosome 1"/>
</dbReference>
<dbReference type="GO" id="GO:0005739">
    <property type="term" value="C:mitochondrion"/>
    <property type="evidence" value="ECO:0007669"/>
    <property type="project" value="UniProtKB-SubCell"/>
</dbReference>
<dbReference type="GO" id="GO:0005525">
    <property type="term" value="F:GTP binding"/>
    <property type="evidence" value="ECO:0007669"/>
    <property type="project" value="UniProtKB-UniRule"/>
</dbReference>
<dbReference type="GO" id="GO:0003924">
    <property type="term" value="F:GTPase activity"/>
    <property type="evidence" value="ECO:0007669"/>
    <property type="project" value="UniProtKB-UniRule"/>
</dbReference>
<dbReference type="GO" id="GO:0003746">
    <property type="term" value="F:translation elongation factor activity"/>
    <property type="evidence" value="ECO:0007669"/>
    <property type="project" value="UniProtKB-UniRule"/>
</dbReference>
<dbReference type="GO" id="GO:0070125">
    <property type="term" value="P:mitochondrial translational elongation"/>
    <property type="evidence" value="ECO:0007669"/>
    <property type="project" value="UniProtKB-UniRule"/>
</dbReference>
<dbReference type="CDD" id="cd01886">
    <property type="entry name" value="EF-G"/>
    <property type="match status" value="1"/>
</dbReference>
<dbReference type="CDD" id="cd16262">
    <property type="entry name" value="EFG_III"/>
    <property type="match status" value="1"/>
</dbReference>
<dbReference type="CDD" id="cd01434">
    <property type="entry name" value="EFG_mtEFG1_IV"/>
    <property type="match status" value="1"/>
</dbReference>
<dbReference type="CDD" id="cd04091">
    <property type="entry name" value="mtEFG1_II_like"/>
    <property type="match status" value="1"/>
</dbReference>
<dbReference type="FunFam" id="3.30.230.10:FF:000003">
    <property type="entry name" value="Elongation factor G"/>
    <property type="match status" value="1"/>
</dbReference>
<dbReference type="FunFam" id="3.30.70.870:FF:000001">
    <property type="entry name" value="Elongation factor G"/>
    <property type="match status" value="1"/>
</dbReference>
<dbReference type="FunFam" id="2.40.30.10:FF:000022">
    <property type="entry name" value="Elongation factor G, mitochondrial"/>
    <property type="match status" value="1"/>
</dbReference>
<dbReference type="FunFam" id="3.30.70.240:FF:000015">
    <property type="entry name" value="Elongation factor G, mitochondrial"/>
    <property type="match status" value="1"/>
</dbReference>
<dbReference type="FunFam" id="3.40.50.300:FF:000558">
    <property type="entry name" value="Elongation factor G, mitochondrial"/>
    <property type="match status" value="1"/>
</dbReference>
<dbReference type="Gene3D" id="3.30.230.10">
    <property type="match status" value="1"/>
</dbReference>
<dbReference type="Gene3D" id="3.30.70.240">
    <property type="match status" value="1"/>
</dbReference>
<dbReference type="Gene3D" id="3.30.70.870">
    <property type="entry name" value="Elongation Factor G (Translational Gtpase), domain 3"/>
    <property type="match status" value="1"/>
</dbReference>
<dbReference type="Gene3D" id="3.40.50.300">
    <property type="entry name" value="P-loop containing nucleotide triphosphate hydrolases"/>
    <property type="match status" value="1"/>
</dbReference>
<dbReference type="Gene3D" id="2.40.30.10">
    <property type="entry name" value="Translation factors"/>
    <property type="match status" value="1"/>
</dbReference>
<dbReference type="HAMAP" id="MF_00054_B">
    <property type="entry name" value="EF_G_EF_2_B"/>
    <property type="match status" value="1"/>
</dbReference>
<dbReference type="InterPro" id="IPR041095">
    <property type="entry name" value="EFG_II"/>
</dbReference>
<dbReference type="InterPro" id="IPR009022">
    <property type="entry name" value="EFG_III"/>
</dbReference>
<dbReference type="InterPro" id="IPR035647">
    <property type="entry name" value="EFG_III/V"/>
</dbReference>
<dbReference type="InterPro" id="IPR047872">
    <property type="entry name" value="EFG_IV"/>
</dbReference>
<dbReference type="InterPro" id="IPR000640">
    <property type="entry name" value="EFG_V-like"/>
</dbReference>
<dbReference type="InterPro" id="IPR004161">
    <property type="entry name" value="EFTu-like_2"/>
</dbReference>
<dbReference type="InterPro" id="IPR027417">
    <property type="entry name" value="P-loop_NTPase"/>
</dbReference>
<dbReference type="InterPro" id="IPR020568">
    <property type="entry name" value="Ribosomal_Su5_D2-typ_SF"/>
</dbReference>
<dbReference type="InterPro" id="IPR014721">
    <property type="entry name" value="Ribsml_uS5_D2-typ_fold_subgr"/>
</dbReference>
<dbReference type="InterPro" id="IPR005225">
    <property type="entry name" value="Small_GTP-bd"/>
</dbReference>
<dbReference type="InterPro" id="IPR000795">
    <property type="entry name" value="T_Tr_GTP-bd_dom"/>
</dbReference>
<dbReference type="InterPro" id="IPR009000">
    <property type="entry name" value="Transl_B-barrel_sf"/>
</dbReference>
<dbReference type="InterPro" id="IPR004540">
    <property type="entry name" value="Transl_elong_EFG/EF2"/>
</dbReference>
<dbReference type="InterPro" id="IPR005517">
    <property type="entry name" value="Transl_elong_EFG/EF2_IV"/>
</dbReference>
<dbReference type="NCBIfam" id="TIGR00484">
    <property type="entry name" value="EF-G"/>
    <property type="match status" value="1"/>
</dbReference>
<dbReference type="NCBIfam" id="NF009381">
    <property type="entry name" value="PRK12740.1-5"/>
    <property type="match status" value="1"/>
</dbReference>
<dbReference type="NCBIfam" id="TIGR00231">
    <property type="entry name" value="small_GTP"/>
    <property type="match status" value="1"/>
</dbReference>
<dbReference type="PANTHER" id="PTHR43636">
    <property type="entry name" value="ELONGATION FACTOR G, MITOCHONDRIAL"/>
    <property type="match status" value="1"/>
</dbReference>
<dbReference type="PANTHER" id="PTHR43636:SF2">
    <property type="entry name" value="ELONGATION FACTOR G, MITOCHONDRIAL"/>
    <property type="match status" value="1"/>
</dbReference>
<dbReference type="Pfam" id="PF00679">
    <property type="entry name" value="EFG_C"/>
    <property type="match status" value="1"/>
</dbReference>
<dbReference type="Pfam" id="PF14492">
    <property type="entry name" value="EFG_III"/>
    <property type="match status" value="1"/>
</dbReference>
<dbReference type="Pfam" id="PF03764">
    <property type="entry name" value="EFG_IV"/>
    <property type="match status" value="1"/>
</dbReference>
<dbReference type="Pfam" id="PF00009">
    <property type="entry name" value="GTP_EFTU"/>
    <property type="match status" value="1"/>
</dbReference>
<dbReference type="Pfam" id="PF03144">
    <property type="entry name" value="GTP_EFTU_D2"/>
    <property type="match status" value="1"/>
</dbReference>
<dbReference type="PRINTS" id="PR00315">
    <property type="entry name" value="ELONGATNFCT"/>
</dbReference>
<dbReference type="SMART" id="SM00838">
    <property type="entry name" value="EFG_C"/>
    <property type="match status" value="1"/>
</dbReference>
<dbReference type="SMART" id="SM00889">
    <property type="entry name" value="EFG_IV"/>
    <property type="match status" value="1"/>
</dbReference>
<dbReference type="SUPFAM" id="SSF54980">
    <property type="entry name" value="EF-G C-terminal domain-like"/>
    <property type="match status" value="2"/>
</dbReference>
<dbReference type="SUPFAM" id="SSF52540">
    <property type="entry name" value="P-loop containing nucleoside triphosphate hydrolases"/>
    <property type="match status" value="1"/>
</dbReference>
<dbReference type="SUPFAM" id="SSF54211">
    <property type="entry name" value="Ribosomal protein S5 domain 2-like"/>
    <property type="match status" value="1"/>
</dbReference>
<dbReference type="SUPFAM" id="SSF50447">
    <property type="entry name" value="Translation proteins"/>
    <property type="match status" value="1"/>
</dbReference>
<dbReference type="PROSITE" id="PS51722">
    <property type="entry name" value="G_TR_2"/>
    <property type="match status" value="1"/>
</dbReference>
<evidence type="ECO:0000255" key="1">
    <source>
        <dbReference type="HAMAP-Rule" id="MF_03061"/>
    </source>
</evidence>
<evidence type="ECO:0000305" key="2"/>
<sequence length="761" mass="84344">MTSVLRGVLKTHLPRTLTLPRCARNFQTTTFLRNEQVKLPQTYDEEKVIIDEINENLKPDDLQASTRLRNIGISAHIDSGKTTFTERVLFYTGRIKAIHEVRGKDSVGAKMDHMDLEREKGITIQSAATYCSWDKDDKSYHFNLIDTPGHIDFTIEVERALRVLDGAVLVVCAVAGVQSQTVTVDRQMRRYNVPRVTFINKMDRMGANPWRAIEQINAKLKIPAAAIQVPIGAEENLQGVVNIIDRVALYNEGSQGETIRKAEIPEDLKELVEEKRALLIETLADVDEEMADIYLEGEEPTVEQIKSAIRRATIGRKFTPVLMGSALANRGIQSVLDSVVDYLPQPNEVLNTGLELQKDGSEKPVHLTPSSSEPFVGLAFKLEEGPYGQLTYIRVYQGKLKKGAYMTHVKTGKKVKVSRLVRMHSNDMEDVAEVGAGEICATFGIDCASGDTFIGQGTQQQITMSSMFVPEAVISLSISPKTKDNGAFSKAMNRFQKEDPTFRVHYDSESKETIISGMGELHLEIYVERIKREYGVDCITGKPQVSYREAITVPSAFDYTHKKQSGGAGQYGRVIGEMNPIESENKFETQIIGGKIPEKFLFACSKGFEDCLEKGPLIGHRVLGVHMLINDGQTHVVDSSELAFRTATHGAFKQAFLNAQPVILEPIMSVEVTAPNEFQGSVVGLINKLGGMINDTVNGPDDFTVTAECSLNSMFGFSTSLRASTQGKGEFSLEFLKYSPTAPQVQKQLIQEYQKAQAAKK</sequence>